<reference key="1">
    <citation type="submission" date="2006-12" db="EMBL/GenBank/DDBJ databases">
        <authorList>
            <person name="Fouts D.E."/>
            <person name="Nelson K.E."/>
            <person name="Sebastian Y."/>
        </authorList>
    </citation>
    <scope>NUCLEOTIDE SEQUENCE [LARGE SCALE GENOMIC DNA]</scope>
    <source>
        <strain>81-176</strain>
    </source>
</reference>
<name>ISPDF_CAMJJ</name>
<protein>
    <recommendedName>
        <fullName evidence="1">Bifunctional enzyme IspD/IspF</fullName>
    </recommendedName>
    <domain>
        <recommendedName>
            <fullName evidence="1">2-C-methyl-D-erythritol 4-phosphate cytidylyltransferase</fullName>
            <ecNumber evidence="1">2.7.7.60</ecNumber>
        </recommendedName>
        <alternativeName>
            <fullName evidence="1">4-diphosphocytidyl-2C-methyl-D-erythritol synthase</fullName>
        </alternativeName>
        <alternativeName>
            <fullName evidence="1">MEP cytidylyltransferase</fullName>
            <shortName evidence="1">MCT</shortName>
        </alternativeName>
    </domain>
    <domain>
        <recommendedName>
            <fullName evidence="1">2-C-methyl-D-erythritol 2,4-cyclodiphosphate synthase</fullName>
            <shortName evidence="1">MECDP-synthase</shortName>
            <shortName evidence="1">MECPP-synthase</shortName>
            <shortName evidence="1">MECPS</shortName>
            <ecNumber evidence="1">4.6.1.12</ecNumber>
        </recommendedName>
    </domain>
</protein>
<organism>
    <name type="scientific">Campylobacter jejuni subsp. jejuni serotype O:23/36 (strain 81-176)</name>
    <dbReference type="NCBI Taxonomy" id="354242"/>
    <lineage>
        <taxon>Bacteria</taxon>
        <taxon>Pseudomonadati</taxon>
        <taxon>Campylobacterota</taxon>
        <taxon>Epsilonproteobacteria</taxon>
        <taxon>Campylobacterales</taxon>
        <taxon>Campylobacteraceae</taxon>
        <taxon>Campylobacter</taxon>
    </lineage>
</organism>
<feature type="chain" id="PRO_0000296742" description="Bifunctional enzyme IspD/IspF">
    <location>
        <begin position="1"/>
        <end position="371"/>
    </location>
</feature>
<feature type="region of interest" description="2-C-methyl-D-erythritol 4-phosphate cytidylyltransferase" evidence="1">
    <location>
        <begin position="1"/>
        <end position="210"/>
    </location>
</feature>
<feature type="region of interest" description="2-C-methyl-D-erythritol 2,4-cyclodiphosphate synthase" evidence="1">
    <location>
        <begin position="211"/>
        <end position="371"/>
    </location>
</feature>
<feature type="binding site" evidence="1">
    <location>
        <begin position="217"/>
        <end position="219"/>
    </location>
    <ligand>
        <name>4-CDP-2-C-methyl-D-erythritol 2-phosphate</name>
        <dbReference type="ChEBI" id="CHEBI:57919"/>
    </ligand>
</feature>
<feature type="binding site" evidence="1">
    <location>
        <position position="217"/>
    </location>
    <ligand>
        <name>a divalent metal cation</name>
        <dbReference type="ChEBI" id="CHEBI:60240"/>
    </ligand>
</feature>
<feature type="binding site" evidence="1">
    <location>
        <position position="219"/>
    </location>
    <ligand>
        <name>a divalent metal cation</name>
        <dbReference type="ChEBI" id="CHEBI:60240"/>
    </ligand>
</feature>
<feature type="binding site" evidence="1">
    <location>
        <begin position="243"/>
        <end position="244"/>
    </location>
    <ligand>
        <name>4-CDP-2-C-methyl-D-erythritol 2-phosphate</name>
        <dbReference type="ChEBI" id="CHEBI:57919"/>
    </ligand>
</feature>
<feature type="binding site" evidence="1">
    <location>
        <position position="251"/>
    </location>
    <ligand>
        <name>a divalent metal cation</name>
        <dbReference type="ChEBI" id="CHEBI:60240"/>
    </ligand>
</feature>
<feature type="binding site" evidence="1">
    <location>
        <begin position="265"/>
        <end position="267"/>
    </location>
    <ligand>
        <name>4-CDP-2-C-methyl-D-erythritol 2-phosphate</name>
        <dbReference type="ChEBI" id="CHEBI:57919"/>
    </ligand>
</feature>
<feature type="binding site" evidence="1">
    <location>
        <begin position="270"/>
        <end position="274"/>
    </location>
    <ligand>
        <name>4-CDP-2-C-methyl-D-erythritol 2-phosphate</name>
        <dbReference type="ChEBI" id="CHEBI:57919"/>
    </ligand>
</feature>
<feature type="binding site" evidence="1">
    <location>
        <begin position="341"/>
        <end position="344"/>
    </location>
    <ligand>
        <name>4-CDP-2-C-methyl-D-erythritol 2-phosphate</name>
        <dbReference type="ChEBI" id="CHEBI:57919"/>
    </ligand>
</feature>
<feature type="binding site" evidence="1">
    <location>
        <position position="348"/>
    </location>
    <ligand>
        <name>4-CDP-2-C-methyl-D-erythritol 2-phosphate</name>
        <dbReference type="ChEBI" id="CHEBI:57919"/>
    </ligand>
</feature>
<feature type="binding site" evidence="1">
    <location>
        <position position="351"/>
    </location>
    <ligand>
        <name>4-CDP-2-C-methyl-D-erythritol 2-phosphate</name>
        <dbReference type="ChEBI" id="CHEBI:57919"/>
    </ligand>
</feature>
<feature type="site" description="Transition state stabilizer" evidence="1">
    <location>
        <position position="16"/>
    </location>
</feature>
<feature type="site" description="Transition state stabilizer" evidence="1">
    <location>
        <position position="23"/>
    </location>
</feature>
<feature type="site" description="Positions MEP for the nucleophilic attack" evidence="1">
    <location>
        <position position="139"/>
    </location>
</feature>
<feature type="site" description="Positions MEP for the nucleophilic attack" evidence="1">
    <location>
        <position position="191"/>
    </location>
</feature>
<feature type="site" description="Transition state stabilizer" evidence="1">
    <location>
        <position position="243"/>
    </location>
</feature>
<feature type="site" description="Transition state stabilizer" evidence="1">
    <location>
        <position position="342"/>
    </location>
</feature>
<keyword id="KW-0414">Isoprene biosynthesis</keyword>
<keyword id="KW-0456">Lyase</keyword>
<keyword id="KW-0479">Metal-binding</keyword>
<keyword id="KW-0511">Multifunctional enzyme</keyword>
<keyword id="KW-0548">Nucleotidyltransferase</keyword>
<keyword id="KW-0808">Transferase</keyword>
<evidence type="ECO:0000255" key="1">
    <source>
        <dbReference type="HAMAP-Rule" id="MF_01520"/>
    </source>
</evidence>
<comment type="function">
    <text evidence="1">Bifunctional enzyme that catalyzes the formation of 4-diphosphocytidyl-2-C-methyl-D-erythritol from CTP and 2-C-methyl-D-erythritol 4-phosphate (MEP) (IspD), and catalyzes the conversion of 4-diphosphocytidyl-2-C-methyl-D-erythritol 2-phosphate (CDP-ME2P) to 2-C-methyl-D-erythritol 2,4-cyclodiphosphate (ME-CPP) with a corresponding release of cytidine 5-monophosphate (CMP) (IspF).</text>
</comment>
<comment type="catalytic activity">
    <reaction evidence="1">
        <text>2-C-methyl-D-erythritol 4-phosphate + CTP + H(+) = 4-CDP-2-C-methyl-D-erythritol + diphosphate</text>
        <dbReference type="Rhea" id="RHEA:13429"/>
        <dbReference type="ChEBI" id="CHEBI:15378"/>
        <dbReference type="ChEBI" id="CHEBI:33019"/>
        <dbReference type="ChEBI" id="CHEBI:37563"/>
        <dbReference type="ChEBI" id="CHEBI:57823"/>
        <dbReference type="ChEBI" id="CHEBI:58262"/>
        <dbReference type="EC" id="2.7.7.60"/>
    </reaction>
</comment>
<comment type="catalytic activity">
    <reaction evidence="1">
        <text>4-CDP-2-C-methyl-D-erythritol 2-phosphate = 2-C-methyl-D-erythritol 2,4-cyclic diphosphate + CMP</text>
        <dbReference type="Rhea" id="RHEA:23864"/>
        <dbReference type="ChEBI" id="CHEBI:57919"/>
        <dbReference type="ChEBI" id="CHEBI:58483"/>
        <dbReference type="ChEBI" id="CHEBI:60377"/>
        <dbReference type="EC" id="4.6.1.12"/>
    </reaction>
</comment>
<comment type="cofactor">
    <cofactor evidence="1">
        <name>a divalent metal cation</name>
        <dbReference type="ChEBI" id="CHEBI:60240"/>
    </cofactor>
</comment>
<comment type="pathway">
    <text evidence="1">Isoprenoid biosynthesis; isopentenyl diphosphate biosynthesis via DXP pathway; isopentenyl diphosphate from 1-deoxy-D-xylulose 5-phosphate: step 2/6.</text>
</comment>
<comment type="pathway">
    <text evidence="1">Isoprenoid biosynthesis; isopentenyl diphosphate biosynthesis via DXP pathway; isopentenyl diphosphate from 1-deoxy-D-xylulose 5-phosphate: step 4/6.</text>
</comment>
<comment type="similarity">
    <text evidence="1">In the N-terminal section; belongs to the IspD/TarI cytidylyltransferase family. IspD subfamily.</text>
</comment>
<comment type="similarity">
    <text evidence="1">In the C-terminal section; belongs to the IspF family.</text>
</comment>
<gene>
    <name evidence="1" type="primary">ispDF</name>
    <name type="ordered locus">CJJ81176_1594</name>
</gene>
<proteinExistence type="inferred from homology"/>
<accession>A1W1K9</accession>
<dbReference type="EC" id="2.7.7.60" evidence="1"/>
<dbReference type="EC" id="4.6.1.12" evidence="1"/>
<dbReference type="EMBL" id="CP000538">
    <property type="protein sequence ID" value="EAQ72803.1"/>
    <property type="molecule type" value="Genomic_DNA"/>
</dbReference>
<dbReference type="RefSeq" id="WP_002856129.1">
    <property type="nucleotide sequence ID" value="NC_008787.1"/>
</dbReference>
<dbReference type="SMR" id="A1W1K9"/>
<dbReference type="KEGG" id="cjj:CJJ81176_1594"/>
<dbReference type="eggNOG" id="COG0245">
    <property type="taxonomic scope" value="Bacteria"/>
</dbReference>
<dbReference type="eggNOG" id="COG1211">
    <property type="taxonomic scope" value="Bacteria"/>
</dbReference>
<dbReference type="HOGENOM" id="CLU_042800_2_5_7"/>
<dbReference type="UniPathway" id="UPA00056">
    <property type="reaction ID" value="UER00093"/>
</dbReference>
<dbReference type="UniPathway" id="UPA00056">
    <property type="reaction ID" value="UER00095"/>
</dbReference>
<dbReference type="Proteomes" id="UP000000646">
    <property type="component" value="Chromosome"/>
</dbReference>
<dbReference type="GO" id="GO:0008685">
    <property type="term" value="F:2-C-methyl-D-erythritol 2,4-cyclodiphosphate synthase activity"/>
    <property type="evidence" value="ECO:0007669"/>
    <property type="project" value="UniProtKB-UniRule"/>
</dbReference>
<dbReference type="GO" id="GO:0050518">
    <property type="term" value="F:2-C-methyl-D-erythritol 4-phosphate cytidylyltransferase activity"/>
    <property type="evidence" value="ECO:0007669"/>
    <property type="project" value="UniProtKB-UniRule"/>
</dbReference>
<dbReference type="GO" id="GO:0046872">
    <property type="term" value="F:metal ion binding"/>
    <property type="evidence" value="ECO:0007669"/>
    <property type="project" value="UniProtKB-KW"/>
</dbReference>
<dbReference type="GO" id="GO:0019288">
    <property type="term" value="P:isopentenyl diphosphate biosynthetic process, methylerythritol 4-phosphate pathway"/>
    <property type="evidence" value="ECO:0007669"/>
    <property type="project" value="UniProtKB-UniRule"/>
</dbReference>
<dbReference type="GO" id="GO:0016114">
    <property type="term" value="P:terpenoid biosynthetic process"/>
    <property type="evidence" value="ECO:0007669"/>
    <property type="project" value="InterPro"/>
</dbReference>
<dbReference type="CDD" id="cd02516">
    <property type="entry name" value="CDP-ME_synthetase"/>
    <property type="match status" value="1"/>
</dbReference>
<dbReference type="CDD" id="cd00554">
    <property type="entry name" value="MECDP_synthase"/>
    <property type="match status" value="1"/>
</dbReference>
<dbReference type="Gene3D" id="3.30.1330.50">
    <property type="entry name" value="2-C-methyl-D-erythritol 2,4-cyclodiphosphate synthase"/>
    <property type="match status" value="1"/>
</dbReference>
<dbReference type="Gene3D" id="3.90.550.10">
    <property type="entry name" value="Spore Coat Polysaccharide Biosynthesis Protein SpsA, Chain A"/>
    <property type="match status" value="1"/>
</dbReference>
<dbReference type="HAMAP" id="MF_01520">
    <property type="entry name" value="IspDF"/>
    <property type="match status" value="1"/>
</dbReference>
<dbReference type="HAMAP" id="MF_00107">
    <property type="entry name" value="IspF"/>
    <property type="match status" value="1"/>
</dbReference>
<dbReference type="InterPro" id="IPR001228">
    <property type="entry name" value="IspD"/>
</dbReference>
<dbReference type="InterPro" id="IPR026596">
    <property type="entry name" value="IspD/F"/>
</dbReference>
<dbReference type="InterPro" id="IPR034683">
    <property type="entry name" value="IspD/TarI"/>
</dbReference>
<dbReference type="InterPro" id="IPR018294">
    <property type="entry name" value="ISPD_synthase_CS"/>
</dbReference>
<dbReference type="InterPro" id="IPR003526">
    <property type="entry name" value="MECDP_synthase"/>
</dbReference>
<dbReference type="InterPro" id="IPR020555">
    <property type="entry name" value="MECDP_synthase_CS"/>
</dbReference>
<dbReference type="InterPro" id="IPR036571">
    <property type="entry name" value="MECDP_synthase_sf"/>
</dbReference>
<dbReference type="InterPro" id="IPR029044">
    <property type="entry name" value="Nucleotide-diphossugar_trans"/>
</dbReference>
<dbReference type="NCBIfam" id="TIGR00453">
    <property type="entry name" value="ispD"/>
    <property type="match status" value="1"/>
</dbReference>
<dbReference type="NCBIfam" id="TIGR00151">
    <property type="entry name" value="ispF"/>
    <property type="match status" value="1"/>
</dbReference>
<dbReference type="NCBIfam" id="NF006899">
    <property type="entry name" value="PRK09382.1"/>
    <property type="match status" value="1"/>
</dbReference>
<dbReference type="PANTHER" id="PTHR43181">
    <property type="entry name" value="2-C-METHYL-D-ERYTHRITOL 2,4-CYCLODIPHOSPHATE SYNTHASE, CHLOROPLASTIC"/>
    <property type="match status" value="1"/>
</dbReference>
<dbReference type="PANTHER" id="PTHR43181:SF1">
    <property type="entry name" value="2-C-METHYL-D-ERYTHRITOL 2,4-CYCLODIPHOSPHATE SYNTHASE, CHLOROPLASTIC"/>
    <property type="match status" value="1"/>
</dbReference>
<dbReference type="Pfam" id="PF01128">
    <property type="entry name" value="IspD"/>
    <property type="match status" value="1"/>
</dbReference>
<dbReference type="Pfam" id="PF02542">
    <property type="entry name" value="YgbB"/>
    <property type="match status" value="1"/>
</dbReference>
<dbReference type="SUPFAM" id="SSF69765">
    <property type="entry name" value="IpsF-like"/>
    <property type="match status" value="1"/>
</dbReference>
<dbReference type="SUPFAM" id="SSF53448">
    <property type="entry name" value="Nucleotide-diphospho-sugar transferases"/>
    <property type="match status" value="1"/>
</dbReference>
<dbReference type="PROSITE" id="PS01295">
    <property type="entry name" value="ISPD"/>
    <property type="match status" value="1"/>
</dbReference>
<dbReference type="PROSITE" id="PS01350">
    <property type="entry name" value="ISPF"/>
    <property type="match status" value="1"/>
</dbReference>
<sequence length="371" mass="41644">MSEISLIMLAAGNSTRFNTKVKKQFLRLGNDPLWLYATKNLSSFYPFKKIVVTSSNISYMKKFTKNYEFIEGGDTRAESLKKALELIDSEFVMVSDVARVLVSKNLFDRLIENLDKADCITPALKVADTTLFDNEALQREKIKLIQTPQISKTKLLKKALDQNLEFTDDSTAIAAMGGKIWFVEGEENARKLTFKEDLKKLDLPTPSFEIFTGNGFDVHEFGENRPLLLAGVQIHPTMGLKAHSDGDVLAHSLTDAILGAAGLGDIGELYPDTDMKFKNANSMELLKQAYDKVREVGFELINIDICVMAQSPKLKDFKQAMQSNIAHTLDLDEFRINVKATTTEKLGFIGRKEGMAVLSSVNLKYFDWTRL</sequence>